<comment type="function">
    <text evidence="1">May play a role in DNA repair. It seems to be involved in an RecBC-independent recombinational process of DNA repair. It may act with RecF and RecO.</text>
</comment>
<comment type="similarity">
    <text evidence="1">Belongs to the RecR family.</text>
</comment>
<comment type="sequence caution" evidence="2">
    <conflict type="erroneous initiation">
        <sequence resource="EMBL-CDS" id="CAE36525"/>
    </conflict>
</comment>
<keyword id="KW-0227">DNA damage</keyword>
<keyword id="KW-0233">DNA recombination</keyword>
<keyword id="KW-0234">DNA repair</keyword>
<keyword id="KW-0479">Metal-binding</keyword>
<keyword id="KW-0862">Zinc</keyword>
<keyword id="KW-0863">Zinc-finger</keyword>
<evidence type="ECO:0000255" key="1">
    <source>
        <dbReference type="HAMAP-Rule" id="MF_00017"/>
    </source>
</evidence>
<evidence type="ECO:0000305" key="2"/>
<organism>
    <name type="scientific">Bordetella parapertussis (strain 12822 / ATCC BAA-587 / NCTC 13253)</name>
    <dbReference type="NCBI Taxonomy" id="257311"/>
    <lineage>
        <taxon>Bacteria</taxon>
        <taxon>Pseudomonadati</taxon>
        <taxon>Pseudomonadota</taxon>
        <taxon>Betaproteobacteria</taxon>
        <taxon>Burkholderiales</taxon>
        <taxon>Alcaligenaceae</taxon>
        <taxon>Bordetella</taxon>
    </lineage>
</organism>
<dbReference type="EMBL" id="BX640426">
    <property type="protein sequence ID" value="CAE36525.1"/>
    <property type="status" value="ALT_INIT"/>
    <property type="molecule type" value="Genomic_DNA"/>
</dbReference>
<dbReference type="RefSeq" id="WP_003809574.1">
    <property type="nucleotide sequence ID" value="NC_002928.3"/>
</dbReference>
<dbReference type="SMR" id="Q7WAY7"/>
<dbReference type="GeneID" id="93202980"/>
<dbReference type="KEGG" id="bpa:BPP1223"/>
<dbReference type="HOGENOM" id="CLU_060739_1_0_4"/>
<dbReference type="Proteomes" id="UP000001421">
    <property type="component" value="Chromosome"/>
</dbReference>
<dbReference type="GO" id="GO:0003677">
    <property type="term" value="F:DNA binding"/>
    <property type="evidence" value="ECO:0007669"/>
    <property type="project" value="UniProtKB-UniRule"/>
</dbReference>
<dbReference type="GO" id="GO:0008270">
    <property type="term" value="F:zinc ion binding"/>
    <property type="evidence" value="ECO:0007669"/>
    <property type="project" value="UniProtKB-KW"/>
</dbReference>
<dbReference type="GO" id="GO:0006310">
    <property type="term" value="P:DNA recombination"/>
    <property type="evidence" value="ECO:0007669"/>
    <property type="project" value="UniProtKB-UniRule"/>
</dbReference>
<dbReference type="GO" id="GO:0006281">
    <property type="term" value="P:DNA repair"/>
    <property type="evidence" value="ECO:0007669"/>
    <property type="project" value="UniProtKB-UniRule"/>
</dbReference>
<dbReference type="CDD" id="cd01025">
    <property type="entry name" value="TOPRIM_recR"/>
    <property type="match status" value="1"/>
</dbReference>
<dbReference type="Gene3D" id="3.40.1360.10">
    <property type="match status" value="1"/>
</dbReference>
<dbReference type="Gene3D" id="1.10.8.420">
    <property type="entry name" value="RecR Domain 1"/>
    <property type="match status" value="1"/>
</dbReference>
<dbReference type="HAMAP" id="MF_00017">
    <property type="entry name" value="RecR"/>
    <property type="match status" value="1"/>
</dbReference>
<dbReference type="InterPro" id="IPR000093">
    <property type="entry name" value="DNA_Rcmb_RecR"/>
</dbReference>
<dbReference type="InterPro" id="IPR023627">
    <property type="entry name" value="Rcmb_RecR"/>
</dbReference>
<dbReference type="InterPro" id="IPR015967">
    <property type="entry name" value="Rcmb_RecR_Znf"/>
</dbReference>
<dbReference type="InterPro" id="IPR006171">
    <property type="entry name" value="TOPRIM_dom"/>
</dbReference>
<dbReference type="InterPro" id="IPR034137">
    <property type="entry name" value="TOPRIM_RecR"/>
</dbReference>
<dbReference type="NCBIfam" id="TIGR00615">
    <property type="entry name" value="recR"/>
    <property type="match status" value="1"/>
</dbReference>
<dbReference type="PANTHER" id="PTHR30446">
    <property type="entry name" value="RECOMBINATION PROTEIN RECR"/>
    <property type="match status" value="1"/>
</dbReference>
<dbReference type="PANTHER" id="PTHR30446:SF0">
    <property type="entry name" value="RECOMBINATION PROTEIN RECR"/>
    <property type="match status" value="1"/>
</dbReference>
<dbReference type="Pfam" id="PF21175">
    <property type="entry name" value="RecR_C"/>
    <property type="match status" value="1"/>
</dbReference>
<dbReference type="Pfam" id="PF21176">
    <property type="entry name" value="RecR_HhH"/>
    <property type="match status" value="1"/>
</dbReference>
<dbReference type="Pfam" id="PF02132">
    <property type="entry name" value="RecR_ZnF"/>
    <property type="match status" value="1"/>
</dbReference>
<dbReference type="Pfam" id="PF13662">
    <property type="entry name" value="Toprim_4"/>
    <property type="match status" value="1"/>
</dbReference>
<dbReference type="SMART" id="SM00493">
    <property type="entry name" value="TOPRIM"/>
    <property type="match status" value="1"/>
</dbReference>
<dbReference type="SUPFAM" id="SSF111304">
    <property type="entry name" value="Recombination protein RecR"/>
    <property type="match status" value="1"/>
</dbReference>
<dbReference type="PROSITE" id="PS50880">
    <property type="entry name" value="TOPRIM"/>
    <property type="match status" value="1"/>
</dbReference>
<gene>
    <name evidence="1" type="primary">recR</name>
    <name type="ordered locus">BPP1223</name>
</gene>
<sequence>MDPQLPEPEPLIALIEALRRLPGVGVRSARRMAYHLLQHDLQGADMLGRALSGAVQHLRHCARCNSFTEDEVCATCANPKRDPGLLCIVETPADQNMIESSHGYRGLYYVLMGRIAPLEGVGPRELDFQRVIERACDGVVQEVILATNFTAEGETTAHFLGDALSERGLKVTRLARGVPAGSELEYVDAGTIAWALMERRST</sequence>
<proteinExistence type="inferred from homology"/>
<protein>
    <recommendedName>
        <fullName evidence="1">Recombination protein RecR</fullName>
    </recommendedName>
</protein>
<accession>Q7WAY7</accession>
<reference key="1">
    <citation type="journal article" date="2003" name="Nat. Genet.">
        <title>Comparative analysis of the genome sequences of Bordetella pertussis, Bordetella parapertussis and Bordetella bronchiseptica.</title>
        <authorList>
            <person name="Parkhill J."/>
            <person name="Sebaihia M."/>
            <person name="Preston A."/>
            <person name="Murphy L.D."/>
            <person name="Thomson N.R."/>
            <person name="Harris D.E."/>
            <person name="Holden M.T.G."/>
            <person name="Churcher C.M."/>
            <person name="Bentley S.D."/>
            <person name="Mungall K.L."/>
            <person name="Cerdeno-Tarraga A.-M."/>
            <person name="Temple L."/>
            <person name="James K.D."/>
            <person name="Harris B."/>
            <person name="Quail M.A."/>
            <person name="Achtman M."/>
            <person name="Atkin R."/>
            <person name="Baker S."/>
            <person name="Basham D."/>
            <person name="Bason N."/>
            <person name="Cherevach I."/>
            <person name="Chillingworth T."/>
            <person name="Collins M."/>
            <person name="Cronin A."/>
            <person name="Davis P."/>
            <person name="Doggett J."/>
            <person name="Feltwell T."/>
            <person name="Goble A."/>
            <person name="Hamlin N."/>
            <person name="Hauser H."/>
            <person name="Holroyd S."/>
            <person name="Jagels K."/>
            <person name="Leather S."/>
            <person name="Moule S."/>
            <person name="Norberczak H."/>
            <person name="O'Neil S."/>
            <person name="Ormond D."/>
            <person name="Price C."/>
            <person name="Rabbinowitsch E."/>
            <person name="Rutter S."/>
            <person name="Sanders M."/>
            <person name="Saunders D."/>
            <person name="Seeger K."/>
            <person name="Sharp S."/>
            <person name="Simmonds M."/>
            <person name="Skelton J."/>
            <person name="Squares R."/>
            <person name="Squares S."/>
            <person name="Stevens K."/>
            <person name="Unwin L."/>
            <person name="Whitehead S."/>
            <person name="Barrell B.G."/>
            <person name="Maskell D.J."/>
        </authorList>
    </citation>
    <scope>NUCLEOTIDE SEQUENCE [LARGE SCALE GENOMIC DNA]</scope>
    <source>
        <strain>12822 / ATCC BAA-587 / NCTC 13253</strain>
    </source>
</reference>
<feature type="chain" id="PRO_0000190290" description="Recombination protein RecR">
    <location>
        <begin position="1"/>
        <end position="202"/>
    </location>
</feature>
<feature type="domain" description="Toprim" evidence="1">
    <location>
        <begin position="84"/>
        <end position="179"/>
    </location>
</feature>
<feature type="zinc finger region" description="C4-type" evidence="1">
    <location>
        <begin position="61"/>
        <end position="76"/>
    </location>
</feature>
<name>RECR_BORPA</name>